<proteinExistence type="inferred from homology"/>
<organism>
    <name type="scientific">Epacris sp</name>
    <dbReference type="NCBI Taxonomy" id="4344"/>
    <lineage>
        <taxon>Eukaryota</taxon>
        <taxon>Viridiplantae</taxon>
        <taxon>Streptophyta</taxon>
        <taxon>Embryophyta</taxon>
        <taxon>Tracheophyta</taxon>
        <taxon>Spermatophyta</taxon>
        <taxon>Magnoliopsida</taxon>
        <taxon>eudicotyledons</taxon>
        <taxon>Gunneridae</taxon>
        <taxon>Pentapetalae</taxon>
        <taxon>asterids</taxon>
        <taxon>Ericales</taxon>
        <taxon>Ericaceae</taxon>
        <taxon>Epacridoideae</taxon>
        <taxon>Epacrideae</taxon>
        <taxon>Epacris</taxon>
    </lineage>
</organism>
<accession>P28412</accession>
<gene>
    <name evidence="1" type="primary">rbcL</name>
</gene>
<protein>
    <recommendedName>
        <fullName evidence="1">Ribulose bisphosphate carboxylase large chain</fullName>
        <shortName evidence="1">RuBisCO large subunit</shortName>
        <ecNumber evidence="1">4.1.1.39</ecNumber>
    </recommendedName>
</protein>
<reference key="1">
    <citation type="journal article" date="1992" name="Science">
        <title>Carnivorous plants: phylogeny and structural evolution.</title>
        <authorList>
            <person name="Albert V.A."/>
            <person name="Williams S.E."/>
            <person name="Chase M.W."/>
        </authorList>
    </citation>
    <scope>NUCLEOTIDE SEQUENCE [GENOMIC DNA]</scope>
</reference>
<geneLocation type="chloroplast"/>
<dbReference type="EC" id="4.1.1.39" evidence="1"/>
<dbReference type="EMBL" id="L01915">
    <property type="protein sequence ID" value="AAA84239.2"/>
    <property type="molecule type" value="Genomic_DNA"/>
</dbReference>
<dbReference type="SMR" id="P28412"/>
<dbReference type="GO" id="GO:0009507">
    <property type="term" value="C:chloroplast"/>
    <property type="evidence" value="ECO:0007669"/>
    <property type="project" value="UniProtKB-SubCell"/>
</dbReference>
<dbReference type="GO" id="GO:0000287">
    <property type="term" value="F:magnesium ion binding"/>
    <property type="evidence" value="ECO:0007669"/>
    <property type="project" value="InterPro"/>
</dbReference>
<dbReference type="GO" id="GO:0004497">
    <property type="term" value="F:monooxygenase activity"/>
    <property type="evidence" value="ECO:0007669"/>
    <property type="project" value="UniProtKB-KW"/>
</dbReference>
<dbReference type="GO" id="GO:0016984">
    <property type="term" value="F:ribulose-bisphosphate carboxylase activity"/>
    <property type="evidence" value="ECO:0007669"/>
    <property type="project" value="UniProtKB-EC"/>
</dbReference>
<dbReference type="GO" id="GO:0009853">
    <property type="term" value="P:photorespiration"/>
    <property type="evidence" value="ECO:0007669"/>
    <property type="project" value="UniProtKB-KW"/>
</dbReference>
<dbReference type="GO" id="GO:0019253">
    <property type="term" value="P:reductive pentose-phosphate cycle"/>
    <property type="evidence" value="ECO:0007669"/>
    <property type="project" value="UniProtKB-KW"/>
</dbReference>
<dbReference type="CDD" id="cd08212">
    <property type="entry name" value="RuBisCO_large_I"/>
    <property type="match status" value="1"/>
</dbReference>
<dbReference type="FunFam" id="3.20.20.110:FF:000001">
    <property type="entry name" value="Ribulose bisphosphate carboxylase large chain"/>
    <property type="match status" value="1"/>
</dbReference>
<dbReference type="FunFam" id="3.30.70.150:FF:000001">
    <property type="entry name" value="Ribulose bisphosphate carboxylase large chain"/>
    <property type="match status" value="1"/>
</dbReference>
<dbReference type="Gene3D" id="3.20.20.110">
    <property type="entry name" value="Ribulose bisphosphate carboxylase, large subunit, C-terminal domain"/>
    <property type="match status" value="1"/>
</dbReference>
<dbReference type="Gene3D" id="3.30.70.150">
    <property type="entry name" value="RuBisCO large subunit, N-terminal domain"/>
    <property type="match status" value="1"/>
</dbReference>
<dbReference type="HAMAP" id="MF_01338">
    <property type="entry name" value="RuBisCO_L_type1"/>
    <property type="match status" value="1"/>
</dbReference>
<dbReference type="InterPro" id="IPR033966">
    <property type="entry name" value="RuBisCO"/>
</dbReference>
<dbReference type="InterPro" id="IPR020878">
    <property type="entry name" value="RuBisCo_large_chain_AS"/>
</dbReference>
<dbReference type="InterPro" id="IPR000685">
    <property type="entry name" value="RuBisCO_lsu_C"/>
</dbReference>
<dbReference type="InterPro" id="IPR036376">
    <property type="entry name" value="RuBisCO_lsu_C_sf"/>
</dbReference>
<dbReference type="InterPro" id="IPR017443">
    <property type="entry name" value="RuBisCO_lsu_fd_N"/>
</dbReference>
<dbReference type="InterPro" id="IPR036422">
    <property type="entry name" value="RuBisCO_lsu_N_sf"/>
</dbReference>
<dbReference type="InterPro" id="IPR020888">
    <property type="entry name" value="RuBisCO_lsuI"/>
</dbReference>
<dbReference type="NCBIfam" id="NF003252">
    <property type="entry name" value="PRK04208.1"/>
    <property type="match status" value="1"/>
</dbReference>
<dbReference type="PANTHER" id="PTHR42704">
    <property type="entry name" value="RIBULOSE BISPHOSPHATE CARBOXYLASE"/>
    <property type="match status" value="1"/>
</dbReference>
<dbReference type="PANTHER" id="PTHR42704:SF15">
    <property type="entry name" value="RIBULOSE BISPHOSPHATE CARBOXYLASE LARGE CHAIN"/>
    <property type="match status" value="1"/>
</dbReference>
<dbReference type="Pfam" id="PF00016">
    <property type="entry name" value="RuBisCO_large"/>
    <property type="match status" value="1"/>
</dbReference>
<dbReference type="Pfam" id="PF02788">
    <property type="entry name" value="RuBisCO_large_N"/>
    <property type="match status" value="1"/>
</dbReference>
<dbReference type="SFLD" id="SFLDG01052">
    <property type="entry name" value="RuBisCO"/>
    <property type="match status" value="1"/>
</dbReference>
<dbReference type="SFLD" id="SFLDS00014">
    <property type="entry name" value="RuBisCO"/>
    <property type="match status" value="1"/>
</dbReference>
<dbReference type="SFLD" id="SFLDG00301">
    <property type="entry name" value="RuBisCO-like_proteins"/>
    <property type="match status" value="1"/>
</dbReference>
<dbReference type="SUPFAM" id="SSF51649">
    <property type="entry name" value="RuBisCo, C-terminal domain"/>
    <property type="match status" value="1"/>
</dbReference>
<dbReference type="SUPFAM" id="SSF54966">
    <property type="entry name" value="RuBisCO, large subunit, small (N-terminal) domain"/>
    <property type="match status" value="1"/>
</dbReference>
<dbReference type="PROSITE" id="PS00157">
    <property type="entry name" value="RUBISCO_LARGE"/>
    <property type="match status" value="1"/>
</dbReference>
<feature type="chain" id="PRO_0000062457" description="Ribulose bisphosphate carboxylase large chain">
    <location>
        <begin position="1" status="less than"/>
        <end position="465"/>
    </location>
</feature>
<feature type="active site" description="Proton acceptor" evidence="1">
    <location>
        <position position="165"/>
    </location>
</feature>
<feature type="active site" description="Proton acceptor" evidence="1">
    <location>
        <position position="284"/>
    </location>
</feature>
<feature type="binding site" description="in homodimeric partner" evidence="1">
    <location>
        <position position="113"/>
    </location>
    <ligand>
        <name>substrate</name>
    </ligand>
</feature>
<feature type="binding site" evidence="1">
    <location>
        <position position="163"/>
    </location>
    <ligand>
        <name>substrate</name>
    </ligand>
</feature>
<feature type="binding site" evidence="1">
    <location>
        <position position="167"/>
    </location>
    <ligand>
        <name>substrate</name>
    </ligand>
</feature>
<feature type="binding site" description="via carbamate group" evidence="1">
    <location>
        <position position="191"/>
    </location>
    <ligand>
        <name>Mg(2+)</name>
        <dbReference type="ChEBI" id="CHEBI:18420"/>
    </ligand>
</feature>
<feature type="binding site" evidence="1">
    <location>
        <position position="193"/>
    </location>
    <ligand>
        <name>Mg(2+)</name>
        <dbReference type="ChEBI" id="CHEBI:18420"/>
    </ligand>
</feature>
<feature type="binding site" evidence="1">
    <location>
        <position position="194"/>
    </location>
    <ligand>
        <name>Mg(2+)</name>
        <dbReference type="ChEBI" id="CHEBI:18420"/>
    </ligand>
</feature>
<feature type="binding site" evidence="1">
    <location>
        <position position="285"/>
    </location>
    <ligand>
        <name>substrate</name>
    </ligand>
</feature>
<feature type="binding site" evidence="1">
    <location>
        <position position="317"/>
    </location>
    <ligand>
        <name>substrate</name>
    </ligand>
</feature>
<feature type="binding site" evidence="1">
    <location>
        <position position="369"/>
    </location>
    <ligand>
        <name>substrate</name>
    </ligand>
</feature>
<feature type="site" description="Transition state stabilizer" evidence="1">
    <location>
        <position position="324"/>
    </location>
</feature>
<feature type="modified residue" description="N6,N6,N6-trimethyllysine" evidence="1">
    <location>
        <position position="4"/>
    </location>
</feature>
<feature type="modified residue" description="N6-carboxylysine" evidence="1">
    <location>
        <position position="191"/>
    </location>
</feature>
<feature type="disulfide bond" description="Interchain; in linked form" evidence="1">
    <location>
        <position position="237"/>
    </location>
</feature>
<feature type="non-terminal residue">
    <location>
        <position position="1"/>
    </location>
</feature>
<comment type="function">
    <text evidence="1">RuBisCO catalyzes two reactions: the carboxylation of D-ribulose 1,5-bisphosphate, the primary event in carbon dioxide fixation, as well as the oxidative fragmentation of the pentose substrate in the photorespiration process. Both reactions occur simultaneously and in competition at the same active site.</text>
</comment>
<comment type="catalytic activity">
    <reaction evidence="1">
        <text>2 (2R)-3-phosphoglycerate + 2 H(+) = D-ribulose 1,5-bisphosphate + CO2 + H2O</text>
        <dbReference type="Rhea" id="RHEA:23124"/>
        <dbReference type="ChEBI" id="CHEBI:15377"/>
        <dbReference type="ChEBI" id="CHEBI:15378"/>
        <dbReference type="ChEBI" id="CHEBI:16526"/>
        <dbReference type="ChEBI" id="CHEBI:57870"/>
        <dbReference type="ChEBI" id="CHEBI:58272"/>
        <dbReference type="EC" id="4.1.1.39"/>
    </reaction>
</comment>
<comment type="catalytic activity">
    <reaction evidence="1">
        <text>D-ribulose 1,5-bisphosphate + O2 = 2-phosphoglycolate + (2R)-3-phosphoglycerate + 2 H(+)</text>
        <dbReference type="Rhea" id="RHEA:36631"/>
        <dbReference type="ChEBI" id="CHEBI:15378"/>
        <dbReference type="ChEBI" id="CHEBI:15379"/>
        <dbReference type="ChEBI" id="CHEBI:57870"/>
        <dbReference type="ChEBI" id="CHEBI:58033"/>
        <dbReference type="ChEBI" id="CHEBI:58272"/>
    </reaction>
</comment>
<comment type="cofactor">
    <cofactor evidence="1">
        <name>Mg(2+)</name>
        <dbReference type="ChEBI" id="CHEBI:18420"/>
    </cofactor>
    <text evidence="1">Binds 1 Mg(2+) ion per subunit.</text>
</comment>
<comment type="subunit">
    <text evidence="1">Heterohexadecamer of 8 large chains and 8 small chains; disulfide-linked. The disulfide link is formed within the large subunit homodimers.</text>
</comment>
<comment type="subcellular location">
    <subcellularLocation>
        <location>Plastid</location>
        <location>Chloroplast</location>
    </subcellularLocation>
</comment>
<comment type="PTM">
    <text evidence="1">The disulfide bond which can form in the large chain dimeric partners within the hexadecamer appears to be associated with oxidative stress and protein turnover.</text>
</comment>
<comment type="miscellaneous">
    <text evidence="1">The basic functional RuBisCO is composed of a large chain homodimer in a 'head-to-tail' conformation. In form I RuBisCO this homodimer is arranged in a barrel-like tetramer with the small subunits forming a tetrameric 'cap' on each end of the 'barrel'.</text>
</comment>
<comment type="similarity">
    <text evidence="1">Belongs to the RuBisCO large chain family. Type I subfamily.</text>
</comment>
<name>RBL_EPASP</name>
<keyword id="KW-0113">Calvin cycle</keyword>
<keyword id="KW-0120">Carbon dioxide fixation</keyword>
<keyword id="KW-0150">Chloroplast</keyword>
<keyword id="KW-1015">Disulfide bond</keyword>
<keyword id="KW-0456">Lyase</keyword>
<keyword id="KW-0460">Magnesium</keyword>
<keyword id="KW-0479">Metal-binding</keyword>
<keyword id="KW-0488">Methylation</keyword>
<keyword id="KW-0503">Monooxygenase</keyword>
<keyword id="KW-0560">Oxidoreductase</keyword>
<keyword id="KW-0601">Photorespiration</keyword>
<keyword id="KW-0602">Photosynthesis</keyword>
<keyword id="KW-0934">Plastid</keyword>
<evidence type="ECO:0000255" key="1">
    <source>
        <dbReference type="HAMAP-Rule" id="MF_01338"/>
    </source>
</evidence>
<sequence>VGFKAGVKDYKLTYYTPNYETKDTDILAAFRVTPQPGVPPEEAGAAVAAESSTGTWTTVWTDGLTSLDRYKGRCYHIEPVPGDENQYIAYVAYPLDLFEEGSVTNMFTSIVGNVFGFKALRALRLEDLRIPAAYAKTFQGPPHGIQVERDKLNKYGRPLLGCTIKPKLGLSAKNYGRAVYECLRGGLDFTKDDENVNSQPFMRWRDRFLFCAEAIYKAQAETGEIKGHYLNATAGTCEEMMKRAVFARELGVPIVMHDYLTGGFTANTSLAEYCRDNGLLLHIHRAMHAVIDRQKNHGIHFRVLAKALRMSGGDHIHAGTVVGKLEGEREITLGFVDLLRDDYIEKDRGRGIYFSQDWVSLPGVLPVASGGIHVWHMPALTEIFGDDSVLQFGGGTLGHPWGNAPGAVANRVALEACVQARNEGRDLAREGNEIIREAGQWSNELSAACAIWKEIKFEFPAMDTL</sequence>